<proteinExistence type="inferred from homology"/>
<protein>
    <recommendedName>
        <fullName evidence="1">Putative membrane protein insertion efficiency factor</fullName>
    </recommendedName>
</protein>
<dbReference type="EMBL" id="AE017197">
    <property type="protein sequence ID" value="AAU03821.1"/>
    <property type="molecule type" value="Genomic_DNA"/>
</dbReference>
<dbReference type="KEGG" id="rty:RT0341"/>
<dbReference type="eggNOG" id="COG0759">
    <property type="taxonomic scope" value="Bacteria"/>
</dbReference>
<dbReference type="HOGENOM" id="CLU_144811_5_2_5"/>
<dbReference type="OrthoDB" id="9801753at2"/>
<dbReference type="Proteomes" id="UP000000604">
    <property type="component" value="Chromosome"/>
</dbReference>
<dbReference type="GO" id="GO:0005886">
    <property type="term" value="C:plasma membrane"/>
    <property type="evidence" value="ECO:0007669"/>
    <property type="project" value="UniProtKB-SubCell"/>
</dbReference>
<dbReference type="HAMAP" id="MF_00386">
    <property type="entry name" value="UPF0161_YidD"/>
    <property type="match status" value="1"/>
</dbReference>
<dbReference type="InterPro" id="IPR002696">
    <property type="entry name" value="Membr_insert_effic_factor_YidD"/>
</dbReference>
<dbReference type="NCBIfam" id="TIGR00278">
    <property type="entry name" value="membrane protein insertion efficiency factor YidD"/>
    <property type="match status" value="1"/>
</dbReference>
<dbReference type="PANTHER" id="PTHR33383">
    <property type="entry name" value="MEMBRANE PROTEIN INSERTION EFFICIENCY FACTOR-RELATED"/>
    <property type="match status" value="1"/>
</dbReference>
<dbReference type="PANTHER" id="PTHR33383:SF1">
    <property type="entry name" value="MEMBRANE PROTEIN INSERTION EFFICIENCY FACTOR-RELATED"/>
    <property type="match status" value="1"/>
</dbReference>
<dbReference type="Pfam" id="PF01809">
    <property type="entry name" value="YidD"/>
    <property type="match status" value="1"/>
</dbReference>
<dbReference type="SMART" id="SM01234">
    <property type="entry name" value="Haemolytic"/>
    <property type="match status" value="1"/>
</dbReference>
<evidence type="ECO:0000255" key="1">
    <source>
        <dbReference type="HAMAP-Rule" id="MF_00386"/>
    </source>
</evidence>
<organism>
    <name type="scientific">Rickettsia typhi (strain ATCC VR-144 / Wilmington)</name>
    <dbReference type="NCBI Taxonomy" id="257363"/>
    <lineage>
        <taxon>Bacteria</taxon>
        <taxon>Pseudomonadati</taxon>
        <taxon>Pseudomonadota</taxon>
        <taxon>Alphaproteobacteria</taxon>
        <taxon>Rickettsiales</taxon>
        <taxon>Rickettsiaceae</taxon>
        <taxon>Rickettsieae</taxon>
        <taxon>Rickettsia</taxon>
        <taxon>typhus group</taxon>
    </lineage>
</organism>
<sequence length="82" mass="9345">MTKILLLTITFYKYFISPLLGNNCIFSPTCSEYAQEAIITHGIIKGLWLTFRRIIKCQPFCIGGYDNVPTSIKNSKQPTKKI</sequence>
<name>YIDD_RICTY</name>
<reference key="1">
    <citation type="journal article" date="2004" name="J. Bacteriol.">
        <title>Complete genome sequence of Rickettsia typhi and comparison with sequences of other Rickettsiae.</title>
        <authorList>
            <person name="McLeod M.P."/>
            <person name="Qin X."/>
            <person name="Karpathy S.E."/>
            <person name="Gioia J."/>
            <person name="Highlander S.K."/>
            <person name="Fox G.E."/>
            <person name="McNeill T.Z."/>
            <person name="Jiang H."/>
            <person name="Muzny D."/>
            <person name="Jacob L.S."/>
            <person name="Hawes A.C."/>
            <person name="Sodergren E."/>
            <person name="Gill R."/>
            <person name="Hume J."/>
            <person name="Morgan M."/>
            <person name="Fan G."/>
            <person name="Amin A.G."/>
            <person name="Gibbs R.A."/>
            <person name="Hong C."/>
            <person name="Yu X.-J."/>
            <person name="Walker D.H."/>
            <person name="Weinstock G.M."/>
        </authorList>
    </citation>
    <scope>NUCLEOTIDE SEQUENCE [LARGE SCALE GENOMIC DNA]</scope>
    <source>
        <strain>ATCC VR-144 / Wilmington</strain>
    </source>
</reference>
<keyword id="KW-0997">Cell inner membrane</keyword>
<keyword id="KW-1003">Cell membrane</keyword>
<keyword id="KW-0472">Membrane</keyword>
<feature type="chain" id="PRO_0000253160" description="Putative membrane protein insertion efficiency factor">
    <location>
        <begin position="1"/>
        <end position="82"/>
    </location>
</feature>
<gene>
    <name type="ordered locus">RT0341</name>
</gene>
<accession>Q68X21</accession>
<comment type="function">
    <text evidence="1">Could be involved in insertion of integral membrane proteins into the membrane.</text>
</comment>
<comment type="subcellular location">
    <subcellularLocation>
        <location evidence="1">Cell inner membrane</location>
        <topology evidence="1">Peripheral membrane protein</topology>
        <orientation evidence="1">Cytoplasmic side</orientation>
    </subcellularLocation>
</comment>
<comment type="similarity">
    <text evidence="1">Belongs to the UPF0161 family.</text>
</comment>